<sequence length="227" mass="25169">MTGRFDWRGQGGHTEASTKAIVFVVEDDISMRRSLTNLFRSVGLEVVAFGSAREMLQSTMPDVTSCLVLDVRLPGLSGLDYQTELARLNIHIPIIFITGHGDIPMTVRAMKGGAVDFLSKPFRDQELLDAVVAATERDRKRREAQRTVANLKSLFETLSPREQAVMKLVATGLMNKQVAAELGLAEITVKIYRGHVMKKMRARSLADLIRMSETLGISANHTEQTQV</sequence>
<gene>
    <name type="primary">nodW</name>
    <name type="ordered locus">bll1714</name>
</gene>
<feature type="chain" id="PRO_0000081152" description="Nodulation protein W">
    <location>
        <begin position="1"/>
        <end position="227"/>
    </location>
</feature>
<feature type="domain" description="Response regulatory" evidence="1">
    <location>
        <begin position="21"/>
        <end position="135"/>
    </location>
</feature>
<feature type="domain" description="HTH luxR-type" evidence="2">
    <location>
        <begin position="151"/>
        <end position="216"/>
    </location>
</feature>
<feature type="DNA-binding region" description="H-T-H motif" evidence="2">
    <location>
        <begin position="175"/>
        <end position="194"/>
    </location>
</feature>
<feature type="modified residue" description="4-aspartylphosphate" evidence="1">
    <location>
        <position position="70"/>
    </location>
</feature>
<proteinExistence type="inferred from homology"/>
<organism>
    <name type="scientific">Bradyrhizobium diazoefficiens (strain JCM 10833 / BCRC 13528 / IAM 13628 / NBRC 14792 / USDA 110)</name>
    <dbReference type="NCBI Taxonomy" id="224911"/>
    <lineage>
        <taxon>Bacteria</taxon>
        <taxon>Pseudomonadati</taxon>
        <taxon>Pseudomonadota</taxon>
        <taxon>Alphaproteobacteria</taxon>
        <taxon>Hyphomicrobiales</taxon>
        <taxon>Nitrobacteraceae</taxon>
        <taxon>Bradyrhizobium</taxon>
    </lineage>
</organism>
<reference key="1">
    <citation type="journal article" date="1990" name="Proc. Natl. Acad. Sci. U.S.A.">
        <title>Proposed regulatory pathway encoded by the nodV and nodW genes, determinants of host specificity in Bradyrhizobium japonicum.</title>
        <authorList>
            <person name="Goettfert M."/>
            <person name="Grob P."/>
            <person name="Hennecke H."/>
        </authorList>
    </citation>
    <scope>NUCLEOTIDE SEQUENCE [GENOMIC DNA]</scope>
    <source>
        <strain>USDA 110spc4</strain>
    </source>
</reference>
<reference key="2">
    <citation type="journal article" date="2001" name="J. Bacteriol.">
        <title>Potential symbiosis-specific genes uncovered by sequencing a 410-kb DNA region of the Bradyrhizobium japonicum chromosome.</title>
        <authorList>
            <person name="Goettfert M."/>
            <person name="Roethlisberger S."/>
            <person name="Kuendig C."/>
            <person name="Beck C."/>
            <person name="Marty R."/>
            <person name="Hennecke H."/>
        </authorList>
    </citation>
    <scope>NUCLEOTIDE SEQUENCE [GENOMIC DNA]</scope>
    <source>
        <strain>USDA 110spc4</strain>
    </source>
</reference>
<reference key="3">
    <citation type="journal article" date="2002" name="DNA Res.">
        <title>Complete genomic sequence of nitrogen-fixing symbiotic bacterium Bradyrhizobium japonicum USDA110.</title>
        <authorList>
            <person name="Kaneko T."/>
            <person name="Nakamura Y."/>
            <person name="Sato S."/>
            <person name="Minamisawa K."/>
            <person name="Uchiumi T."/>
            <person name="Sasamoto S."/>
            <person name="Watanabe A."/>
            <person name="Idesawa K."/>
            <person name="Iriguchi M."/>
            <person name="Kawashima K."/>
            <person name="Kohara M."/>
            <person name="Matsumoto M."/>
            <person name="Shimpo S."/>
            <person name="Tsuruoka H."/>
            <person name="Wada T."/>
            <person name="Yamada M."/>
            <person name="Tabata S."/>
        </authorList>
    </citation>
    <scope>NUCLEOTIDE SEQUENCE [LARGE SCALE GENOMIC DNA]</scope>
    <source>
        <strain>JCM 10833 / BCRC 13528 / IAM 13628 / NBRC 14792 / USDA 110</strain>
    </source>
</reference>
<keyword id="KW-0963">Cytoplasm</keyword>
<keyword id="KW-0238">DNA-binding</keyword>
<keyword id="KW-0536">Nodulation</keyword>
<keyword id="KW-0597">Phosphoprotein</keyword>
<keyword id="KW-1185">Reference proteome</keyword>
<keyword id="KW-0804">Transcription</keyword>
<keyword id="KW-0805">Transcription regulation</keyword>
<keyword id="KW-0902">Two-component regulatory system</keyword>
<dbReference type="EMBL" id="M31765">
    <property type="protein sequence ID" value="AAA26232.1"/>
    <property type="molecule type" value="Genomic_DNA"/>
</dbReference>
<dbReference type="EMBL" id="AH010242">
    <property type="protein sequence ID" value="AAG60697.1"/>
    <property type="molecule type" value="Genomic_DNA"/>
</dbReference>
<dbReference type="EMBL" id="BA000040">
    <property type="protein sequence ID" value="BAC46979.1"/>
    <property type="molecule type" value="Genomic_DNA"/>
</dbReference>
<dbReference type="PIR" id="B35989">
    <property type="entry name" value="B35989"/>
</dbReference>
<dbReference type="RefSeq" id="NP_768354.1">
    <property type="nucleotide sequence ID" value="NC_004463.1"/>
</dbReference>
<dbReference type="RefSeq" id="WP_011084526.1">
    <property type="nucleotide sequence ID" value="NZ_CP011360.1"/>
</dbReference>
<dbReference type="SMR" id="P15940"/>
<dbReference type="STRING" id="224911.AAV28_05505"/>
<dbReference type="EnsemblBacteria" id="BAC46979">
    <property type="protein sequence ID" value="BAC46979"/>
    <property type="gene ID" value="BAC46979"/>
</dbReference>
<dbReference type="KEGG" id="bja:bll1714"/>
<dbReference type="PATRIC" id="fig|224911.44.peg.1177"/>
<dbReference type="eggNOG" id="COG4566">
    <property type="taxonomic scope" value="Bacteria"/>
</dbReference>
<dbReference type="HOGENOM" id="CLU_000445_90_4_5"/>
<dbReference type="InParanoid" id="P15940"/>
<dbReference type="OrthoDB" id="9782655at2"/>
<dbReference type="PhylomeDB" id="P15940"/>
<dbReference type="Proteomes" id="UP000002526">
    <property type="component" value="Chromosome"/>
</dbReference>
<dbReference type="GO" id="GO:0005737">
    <property type="term" value="C:cytoplasm"/>
    <property type="evidence" value="ECO:0007669"/>
    <property type="project" value="UniProtKB-SubCell"/>
</dbReference>
<dbReference type="GO" id="GO:0003677">
    <property type="term" value="F:DNA binding"/>
    <property type="evidence" value="ECO:0007669"/>
    <property type="project" value="UniProtKB-KW"/>
</dbReference>
<dbReference type="GO" id="GO:0000160">
    <property type="term" value="P:phosphorelay signal transduction system"/>
    <property type="evidence" value="ECO:0007669"/>
    <property type="project" value="UniProtKB-KW"/>
</dbReference>
<dbReference type="GO" id="GO:0006355">
    <property type="term" value="P:regulation of DNA-templated transcription"/>
    <property type="evidence" value="ECO:0007669"/>
    <property type="project" value="InterPro"/>
</dbReference>
<dbReference type="CDD" id="cd06170">
    <property type="entry name" value="LuxR_C_like"/>
    <property type="match status" value="1"/>
</dbReference>
<dbReference type="CDD" id="cd17537">
    <property type="entry name" value="REC_FixJ"/>
    <property type="match status" value="1"/>
</dbReference>
<dbReference type="FunFam" id="3.40.50.2300:FF:000018">
    <property type="entry name" value="DNA-binding transcriptional regulator NtrC"/>
    <property type="match status" value="1"/>
</dbReference>
<dbReference type="Gene3D" id="3.40.50.2300">
    <property type="match status" value="1"/>
</dbReference>
<dbReference type="Gene3D" id="1.10.10.10">
    <property type="entry name" value="Winged helix-like DNA-binding domain superfamily/Winged helix DNA-binding domain"/>
    <property type="match status" value="1"/>
</dbReference>
<dbReference type="InterPro" id="IPR011006">
    <property type="entry name" value="CheY-like_superfamily"/>
</dbReference>
<dbReference type="InterPro" id="IPR001789">
    <property type="entry name" value="Sig_transdc_resp-reg_receiver"/>
</dbReference>
<dbReference type="InterPro" id="IPR000792">
    <property type="entry name" value="Tscrpt_reg_LuxR_C"/>
</dbReference>
<dbReference type="InterPro" id="IPR036388">
    <property type="entry name" value="WH-like_DNA-bd_sf"/>
</dbReference>
<dbReference type="PANTHER" id="PTHR44688">
    <property type="entry name" value="DNA-BINDING TRANSCRIPTIONAL ACTIVATOR DEVR_DOSR"/>
    <property type="match status" value="1"/>
</dbReference>
<dbReference type="PANTHER" id="PTHR44688:SF16">
    <property type="entry name" value="DNA-BINDING TRANSCRIPTIONAL ACTIVATOR DEVR_DOSR"/>
    <property type="match status" value="1"/>
</dbReference>
<dbReference type="Pfam" id="PF00196">
    <property type="entry name" value="GerE"/>
    <property type="match status" value="1"/>
</dbReference>
<dbReference type="Pfam" id="PF00072">
    <property type="entry name" value="Response_reg"/>
    <property type="match status" value="1"/>
</dbReference>
<dbReference type="PRINTS" id="PR00038">
    <property type="entry name" value="HTHLUXR"/>
</dbReference>
<dbReference type="SMART" id="SM00421">
    <property type="entry name" value="HTH_LUXR"/>
    <property type="match status" value="1"/>
</dbReference>
<dbReference type="SMART" id="SM00448">
    <property type="entry name" value="REC"/>
    <property type="match status" value="1"/>
</dbReference>
<dbReference type="SUPFAM" id="SSF52172">
    <property type="entry name" value="CheY-like"/>
    <property type="match status" value="1"/>
</dbReference>
<dbReference type="PROSITE" id="PS00622">
    <property type="entry name" value="HTH_LUXR_1"/>
    <property type="match status" value="1"/>
</dbReference>
<dbReference type="PROSITE" id="PS50043">
    <property type="entry name" value="HTH_LUXR_2"/>
    <property type="match status" value="1"/>
</dbReference>
<dbReference type="PROSITE" id="PS50110">
    <property type="entry name" value="RESPONSE_REGULATORY"/>
    <property type="match status" value="1"/>
</dbReference>
<accession>P15940</accession>
<name>NODW_BRADU</name>
<evidence type="ECO:0000255" key="1">
    <source>
        <dbReference type="PROSITE-ProRule" id="PRU00169"/>
    </source>
</evidence>
<evidence type="ECO:0000255" key="2">
    <source>
        <dbReference type="PROSITE-ProRule" id="PRU00411"/>
    </source>
</evidence>
<evidence type="ECO:0000305" key="3"/>
<protein>
    <recommendedName>
        <fullName>Nodulation protein W</fullName>
    </recommendedName>
</protein>
<comment type="function">
    <text>Member of the two-component regulatory system NodV/NodW probably involved in the regulation of the transcription of genes involved in the nodulation process.</text>
</comment>
<comment type="subcellular location">
    <subcellularLocation>
        <location evidence="3">Cytoplasm</location>
    </subcellularLocation>
</comment>
<comment type="PTM">
    <text evidence="3">Phosphorylated by NodV.</text>
</comment>